<protein>
    <recommendedName>
        <fullName evidence="1">UPF0223 protein SH1855</fullName>
    </recommendedName>
</protein>
<dbReference type="EMBL" id="AP006716">
    <property type="protein sequence ID" value="BAE05164.1"/>
    <property type="molecule type" value="Genomic_DNA"/>
</dbReference>
<dbReference type="RefSeq" id="WP_011276131.1">
    <property type="nucleotide sequence ID" value="NC_007168.1"/>
</dbReference>
<dbReference type="SMR" id="Q4L5B1"/>
<dbReference type="KEGG" id="sha:SH1855"/>
<dbReference type="eggNOG" id="COG4476">
    <property type="taxonomic scope" value="Bacteria"/>
</dbReference>
<dbReference type="HOGENOM" id="CLU_166693_0_0_9"/>
<dbReference type="OrthoDB" id="1649074at2"/>
<dbReference type="Proteomes" id="UP000000543">
    <property type="component" value="Chromosome"/>
</dbReference>
<dbReference type="Gene3D" id="1.10.220.80">
    <property type="entry name" value="BH2638-like"/>
    <property type="match status" value="1"/>
</dbReference>
<dbReference type="HAMAP" id="MF_01041">
    <property type="entry name" value="UPF0223"/>
    <property type="match status" value="1"/>
</dbReference>
<dbReference type="InterPro" id="IPR023324">
    <property type="entry name" value="BH2638-like_sf"/>
</dbReference>
<dbReference type="InterPro" id="IPR007920">
    <property type="entry name" value="UPF0223"/>
</dbReference>
<dbReference type="NCBIfam" id="NF003353">
    <property type="entry name" value="PRK04387.1"/>
    <property type="match status" value="1"/>
</dbReference>
<dbReference type="Pfam" id="PF05256">
    <property type="entry name" value="UPF0223"/>
    <property type="match status" value="1"/>
</dbReference>
<dbReference type="PIRSF" id="PIRSF037260">
    <property type="entry name" value="UPF0223"/>
    <property type="match status" value="1"/>
</dbReference>
<dbReference type="SUPFAM" id="SSF158504">
    <property type="entry name" value="BH2638-like"/>
    <property type="match status" value="1"/>
</dbReference>
<feature type="chain" id="PRO_0000216691" description="UPF0223 protein SH1855">
    <location>
        <begin position="1"/>
        <end position="90"/>
    </location>
</feature>
<accession>Q4L5B1</accession>
<evidence type="ECO:0000255" key="1">
    <source>
        <dbReference type="HAMAP-Rule" id="MF_01041"/>
    </source>
</evidence>
<organism>
    <name type="scientific">Staphylococcus haemolyticus (strain JCSC1435)</name>
    <dbReference type="NCBI Taxonomy" id="279808"/>
    <lineage>
        <taxon>Bacteria</taxon>
        <taxon>Bacillati</taxon>
        <taxon>Bacillota</taxon>
        <taxon>Bacilli</taxon>
        <taxon>Bacillales</taxon>
        <taxon>Staphylococcaceae</taxon>
        <taxon>Staphylococcus</taxon>
    </lineage>
</organism>
<reference key="1">
    <citation type="journal article" date="2005" name="J. Bacteriol.">
        <title>Whole-genome sequencing of Staphylococcus haemolyticus uncovers the extreme plasticity of its genome and the evolution of human-colonizing staphylococcal species.</title>
        <authorList>
            <person name="Takeuchi F."/>
            <person name="Watanabe S."/>
            <person name="Baba T."/>
            <person name="Yuzawa H."/>
            <person name="Ito T."/>
            <person name="Morimoto Y."/>
            <person name="Kuroda M."/>
            <person name="Cui L."/>
            <person name="Takahashi M."/>
            <person name="Ankai A."/>
            <person name="Baba S."/>
            <person name="Fukui S."/>
            <person name="Lee J.C."/>
            <person name="Hiramatsu K."/>
        </authorList>
    </citation>
    <scope>NUCLEOTIDE SEQUENCE [LARGE SCALE GENOMIC DNA]</scope>
    <source>
        <strain>JCSC1435</strain>
    </source>
</reference>
<proteinExistence type="inferred from homology"/>
<name>Y1855_STAHJ</name>
<sequence>MEYQYPLDLDWSNEEMVDVIAFFNKIENYYENSVNGQDLMNHYKRFKEIVPSKAEEKQLFKEFEEKSNYNSYKVVQEVKNNPELTSFSAK</sequence>
<gene>
    <name type="ordered locus">SH1855</name>
</gene>
<comment type="similarity">
    <text evidence="1">Belongs to the UPF0223 family.</text>
</comment>